<sequence length="119" mass="13814">MVKLAFPRELRLLTPTHFTFVFQQPQRAGTPQITILGRLNALGHPRIGLTVAKKHVKRAHERNRIKRLTRESFRLRQHELPAMDFVIVAKKGIGELDNHALTEALEKLWRRHCRLARGS</sequence>
<name>RNPA_ERWT9</name>
<feature type="chain" id="PRO_1000100359" description="Ribonuclease P protein component">
    <location>
        <begin position="1"/>
        <end position="119"/>
    </location>
</feature>
<comment type="function">
    <text evidence="1">RNaseP catalyzes the removal of the 5'-leader sequence from pre-tRNA to produce the mature 5'-terminus. It can also cleave other RNA substrates such as 4.5S RNA. The protein component plays an auxiliary but essential role in vivo by binding to the 5'-leader sequence and broadening the substrate specificity of the ribozyme.</text>
</comment>
<comment type="catalytic activity">
    <reaction evidence="1">
        <text>Endonucleolytic cleavage of RNA, removing 5'-extranucleotides from tRNA precursor.</text>
        <dbReference type="EC" id="3.1.26.5"/>
    </reaction>
</comment>
<comment type="subunit">
    <text evidence="1">Consists of a catalytic RNA component (M1 or rnpB) and a protein subunit.</text>
</comment>
<comment type="similarity">
    <text evidence="1">Belongs to the RnpA family.</text>
</comment>
<accession>B2VCE5</accession>
<protein>
    <recommendedName>
        <fullName evidence="1">Ribonuclease P protein component</fullName>
        <shortName evidence="1">RNase P protein</shortName>
        <shortName evidence="1">RNaseP protein</shortName>
        <ecNumber evidence="1">3.1.26.5</ecNumber>
    </recommendedName>
    <alternativeName>
        <fullName evidence="1">Protein C5</fullName>
    </alternativeName>
</protein>
<gene>
    <name evidence="1" type="primary">rnpA</name>
    <name type="ordered locus">ETA_34550</name>
</gene>
<keyword id="KW-0255">Endonuclease</keyword>
<keyword id="KW-0378">Hydrolase</keyword>
<keyword id="KW-0540">Nuclease</keyword>
<keyword id="KW-1185">Reference proteome</keyword>
<keyword id="KW-0694">RNA-binding</keyword>
<keyword id="KW-0819">tRNA processing</keyword>
<evidence type="ECO:0000255" key="1">
    <source>
        <dbReference type="HAMAP-Rule" id="MF_00227"/>
    </source>
</evidence>
<organism>
    <name type="scientific">Erwinia tasmaniensis (strain DSM 17950 / CFBP 7177 / CIP 109463 / NCPPB 4357 / Et1/99)</name>
    <dbReference type="NCBI Taxonomy" id="465817"/>
    <lineage>
        <taxon>Bacteria</taxon>
        <taxon>Pseudomonadati</taxon>
        <taxon>Pseudomonadota</taxon>
        <taxon>Gammaproteobacteria</taxon>
        <taxon>Enterobacterales</taxon>
        <taxon>Erwiniaceae</taxon>
        <taxon>Erwinia</taxon>
    </lineage>
</organism>
<reference key="1">
    <citation type="journal article" date="2008" name="Environ. Microbiol.">
        <title>The genome of Erwinia tasmaniensis strain Et1/99, a non-pathogenic bacterium in the genus Erwinia.</title>
        <authorList>
            <person name="Kube M."/>
            <person name="Migdoll A.M."/>
            <person name="Mueller I."/>
            <person name="Kuhl H."/>
            <person name="Beck A."/>
            <person name="Reinhardt R."/>
            <person name="Geider K."/>
        </authorList>
    </citation>
    <scope>NUCLEOTIDE SEQUENCE [LARGE SCALE GENOMIC DNA]</scope>
    <source>
        <strain>DSM 17950 / CFBP 7177 / CIP 109463 / NCPPB 4357 / Et1/99</strain>
    </source>
</reference>
<proteinExistence type="inferred from homology"/>
<dbReference type="EC" id="3.1.26.5" evidence="1"/>
<dbReference type="EMBL" id="CU468135">
    <property type="protein sequence ID" value="CAO98501.1"/>
    <property type="molecule type" value="Genomic_DNA"/>
</dbReference>
<dbReference type="RefSeq" id="WP_004161182.1">
    <property type="nucleotide sequence ID" value="NC_010694.1"/>
</dbReference>
<dbReference type="SMR" id="B2VCE5"/>
<dbReference type="STRING" id="465817.ETA_34550"/>
<dbReference type="GeneID" id="97604315"/>
<dbReference type="KEGG" id="eta:ETA_34550"/>
<dbReference type="eggNOG" id="COG0594">
    <property type="taxonomic scope" value="Bacteria"/>
</dbReference>
<dbReference type="HOGENOM" id="CLU_117179_11_0_6"/>
<dbReference type="OrthoDB" id="9796422at2"/>
<dbReference type="Proteomes" id="UP000001726">
    <property type="component" value="Chromosome"/>
</dbReference>
<dbReference type="GO" id="GO:0030677">
    <property type="term" value="C:ribonuclease P complex"/>
    <property type="evidence" value="ECO:0007669"/>
    <property type="project" value="TreeGrafter"/>
</dbReference>
<dbReference type="GO" id="GO:0042781">
    <property type="term" value="F:3'-tRNA processing endoribonuclease activity"/>
    <property type="evidence" value="ECO:0007669"/>
    <property type="project" value="TreeGrafter"/>
</dbReference>
<dbReference type="GO" id="GO:0004526">
    <property type="term" value="F:ribonuclease P activity"/>
    <property type="evidence" value="ECO:0007669"/>
    <property type="project" value="UniProtKB-UniRule"/>
</dbReference>
<dbReference type="GO" id="GO:0000049">
    <property type="term" value="F:tRNA binding"/>
    <property type="evidence" value="ECO:0007669"/>
    <property type="project" value="UniProtKB-UniRule"/>
</dbReference>
<dbReference type="GO" id="GO:0001682">
    <property type="term" value="P:tRNA 5'-leader removal"/>
    <property type="evidence" value="ECO:0007669"/>
    <property type="project" value="UniProtKB-UniRule"/>
</dbReference>
<dbReference type="FunFam" id="3.30.230.10:FF:000016">
    <property type="entry name" value="Ribonuclease P protein component"/>
    <property type="match status" value="1"/>
</dbReference>
<dbReference type="Gene3D" id="3.30.230.10">
    <property type="match status" value="1"/>
</dbReference>
<dbReference type="HAMAP" id="MF_00227">
    <property type="entry name" value="RNase_P"/>
    <property type="match status" value="1"/>
</dbReference>
<dbReference type="InterPro" id="IPR020568">
    <property type="entry name" value="Ribosomal_Su5_D2-typ_SF"/>
</dbReference>
<dbReference type="InterPro" id="IPR014721">
    <property type="entry name" value="Ribsml_uS5_D2-typ_fold_subgr"/>
</dbReference>
<dbReference type="InterPro" id="IPR000100">
    <property type="entry name" value="RNase_P"/>
</dbReference>
<dbReference type="InterPro" id="IPR020539">
    <property type="entry name" value="RNase_P_CS"/>
</dbReference>
<dbReference type="NCBIfam" id="TIGR00188">
    <property type="entry name" value="rnpA"/>
    <property type="match status" value="1"/>
</dbReference>
<dbReference type="PANTHER" id="PTHR33992">
    <property type="entry name" value="RIBONUCLEASE P PROTEIN COMPONENT"/>
    <property type="match status" value="1"/>
</dbReference>
<dbReference type="PANTHER" id="PTHR33992:SF1">
    <property type="entry name" value="RIBONUCLEASE P PROTEIN COMPONENT"/>
    <property type="match status" value="1"/>
</dbReference>
<dbReference type="Pfam" id="PF00825">
    <property type="entry name" value="Ribonuclease_P"/>
    <property type="match status" value="1"/>
</dbReference>
<dbReference type="SUPFAM" id="SSF54211">
    <property type="entry name" value="Ribosomal protein S5 domain 2-like"/>
    <property type="match status" value="1"/>
</dbReference>
<dbReference type="PROSITE" id="PS00648">
    <property type="entry name" value="RIBONUCLEASE_P"/>
    <property type="match status" value="1"/>
</dbReference>